<accession>P04325</accession>
<evidence type="ECO:0000255" key="1">
    <source>
        <dbReference type="HAMAP-Rule" id="MF_04077"/>
    </source>
</evidence>
<evidence type="ECO:0000256" key="2">
    <source>
        <dbReference type="SAM" id="MobiDB-lite"/>
    </source>
</evidence>
<feature type="chain" id="PRO_0000085252" description="Protein Rev">
    <location>
        <begin position="1"/>
        <end position="116"/>
    </location>
</feature>
<feature type="region of interest" description="Homomultimerization" evidence="1">
    <location>
        <begin position="18"/>
        <end position="26"/>
    </location>
</feature>
<feature type="region of interest" description="Disordered" evidence="2">
    <location>
        <begin position="23"/>
        <end position="49"/>
    </location>
</feature>
<feature type="short sequence motif" description="Nuclear localization signal and RNA-binding (RRE)" evidence="1">
    <location>
        <begin position="34"/>
        <end position="50"/>
    </location>
</feature>
<feature type="short sequence motif" description="Nuclear export signal and binding to XPO1" evidence="1">
    <location>
        <begin position="73"/>
        <end position="84"/>
    </location>
</feature>
<feature type="compositionally biased region" description="Basic residues" evidence="2">
    <location>
        <begin position="36"/>
        <end position="47"/>
    </location>
</feature>
<feature type="modified residue" description="Phosphoserine; by host CK2" evidence="1">
    <location>
        <position position="5"/>
    </location>
</feature>
<feature type="modified residue" description="Phosphoserine; by host CK2" evidence="1">
    <location>
        <position position="8"/>
    </location>
</feature>
<feature type="modified residue" description="Phosphoserine; by host" evidence="1">
    <location>
        <position position="92"/>
    </location>
</feature>
<feature type="modified residue" description="Phosphoserine; by host" evidence="1">
    <location>
        <position position="99"/>
    </location>
</feature>
<comment type="function">
    <text evidence="1">Escorts unspliced or incompletely spliced viral pre-mRNAs (late transcripts) out of the nucleus of infected cells. These pre-mRNAs carry a recognition sequence called Rev responsive element (RRE) located in the env gene, that is not present in fully spliced viral mRNAs (early transcripts). This function is essential since most viral proteins are translated from unspliced or partially spliced pre-mRNAs which cannot exit the nucleus by the pathway used by fully processed cellular mRNAs. Rev itself is translated from a fully spliced mRNA that readily exits the nucleus. Rev's nuclear localization signal (NLS) binds directly to KPNB1/Importin beta-1 without previous binding to KPNA1/Importin alpha-1. KPNB1 binds to the GDP bound form of RAN (Ran-GDP) and targets Rev to the nucleus. In the nucleus, the conversion from Ran-GDP to Ran-GTP dissociates Rev from KPNB1 and allows Rev's binding to the RRE in viral pre-mRNAs. Rev multimerization on the RRE via cooperative assembly exposes its nuclear export signal (NES) to the surface. Rev can then form a complex with XPO1/CRM1 and Ran-GTP, leading to nuclear export of the complex. Conversion from Ran-GTP to Ran-GDP mediates dissociation of the Rev/RRE/XPO1/RAN complex, so that Rev can return to the nucleus for a subsequent round of export. Beside KPNB1, also seems to interact with TNPO1/Transportin-1, RANBP5/IPO5 and IPO7/RANBP7 for nuclear import. The nucleoporin-like HRB/RIP is an essential cofactor that probably indirectly interacts with Rev to release HIV RNAs from the perinuclear region to the cytoplasm.</text>
</comment>
<comment type="subunit">
    <text evidence="1">Homomultimer; when bound to the RRE. Multimeric assembly is essential for activity and may involve XPO1. Binds to human KPNB1, XPO1, TNPO1, RANBP5 and IPO7. Interacts with the viral Integrase. Interacts with human KHDRBS1. Interacts with human NAP1; this interaction decreases Rev multimerization and stimulates its activity. Interacts with human DEAD-box helicases DDX3 and DDX24; these interactions may serve for viral RNA export to the cytoplasm and packaging, respectively. Interacts with human PSIP1; this interaction may inhibit HIV-1 DNA integration by promoting dissociation of the Integrase-LEDGF/p75 complex.</text>
</comment>
<comment type="interaction">
    <interactant intactId="EBI-7061954">
        <id>P04325</id>
    </interactant>
    <interactant intactId="EBI-3390054">
        <id>P0CG48</id>
        <label>UBC</label>
    </interactant>
    <organismsDiffer>true</organismsDiffer>
    <experiments>2</experiments>
</comment>
<comment type="subcellular location">
    <subcellularLocation>
        <location evidence="1">Host nucleus</location>
        <location evidence="1">Host nucleolus</location>
    </subcellularLocation>
    <subcellularLocation>
        <location evidence="1">Host cytoplasm</location>
    </subcellularLocation>
    <text evidence="1">The presence of both nuclear import and nuclear export signals leads to continuous shuttling between the nucleus and cytoplasm.</text>
</comment>
<comment type="domain">
    <text evidence="1">The RNA-binding motif binds to the RRE, a 240 bp stem-and-loop structure present in incompletely spliced viral pre-mRNAs. This region also contains the NLS which mediates nuclear localization via KPNB1 binding and, when the N-terminal sequence is present, nucleolar targeting. These overlapping functions prevent Rev bound to RRE from undesirable return to the nucleus. When Rev binds the RRE, the NLS becomes masked while the NES remains accessible. The leucine-rich NES mediates binding to human XPO1.</text>
</comment>
<comment type="PTM">
    <text evidence="1">Asymmetrically arginine dimethylated at one site by host PRMT6. Methylation impairs the RNA-binding activity and export of viral RNA from the nucleus to the cytoplasm.</text>
</comment>
<comment type="PTM">
    <text evidence="1">Phosphorylated by protein kinase CK2. Presence of, and maybe binding to the N-terminus of the regulatory beta subunit of CK2 is necessary for CK2-mediated Rev's phosphorylation.</text>
</comment>
<comment type="miscellaneous">
    <text evidence="1">HIV-1 lineages are divided in three main groups, M (for Major), O (for Outlier), and N (for New, or Non-M, Non-O). The vast majority of strains found worldwide belong to the group M. Group O seems to be endemic to and largely confined to Cameroon and neighboring countries in West Central Africa, where these viruses represent a small minority of HIV-1 strains. The group N is represented by a limited number of isolates from Cameroonian persons. The group M is further subdivided in 9 clades or subtypes (A to D, F to H, J and K).</text>
</comment>
<comment type="similarity">
    <text evidence="1">Belongs to the HIV-1 REV protein family.</text>
</comment>
<name>REV_HV112</name>
<reference key="1">
    <citation type="journal article" date="1986" name="Proc. Natl. Acad. Sci. U.S.A.">
        <title>Three novel genes of human T-lymphotropic virus type III: immune reactivity of their products with sera from acquired immune deficiency syndrome patients.</title>
        <authorList>
            <person name="Arya S.K."/>
            <person name="Gallo R.C."/>
        </authorList>
    </citation>
    <scope>NUCLEOTIDE SEQUENCE [GENOMIC RNA]</scope>
</reference>
<reference key="2">
    <citation type="journal article" date="1986" name="Nature">
        <title>A second post-transcriptional trans-activator gene required for HTLV-III replication.</title>
        <authorList>
            <person name="Sodroski J."/>
            <person name="Goh W.C."/>
            <person name="Rosen C."/>
            <person name="Dayton A."/>
            <person name="Terwilliger E."/>
            <person name="Haseltine W.A."/>
        </authorList>
    </citation>
    <scope>NUCLEOTIDE SEQUENCE [GENOMIC RNA]</scope>
</reference>
<reference key="3">
    <citation type="journal article" date="1999" name="Arch. Biochem. Biophys.">
        <title>The ins and outs of HIV Rev.</title>
        <authorList>
            <person name="Hope T.J."/>
        </authorList>
    </citation>
    <scope>REVIEW</scope>
</reference>
<proteinExistence type="evidence at protein level"/>
<organism>
    <name type="scientific">Human immunodeficiency virus type 1 group M subtype B (isolate PCV12)</name>
    <name type="common">HIV-1</name>
    <dbReference type="NCBI Taxonomy" id="11679"/>
    <lineage>
        <taxon>Viruses</taxon>
        <taxon>Riboviria</taxon>
        <taxon>Pararnavirae</taxon>
        <taxon>Artverviricota</taxon>
        <taxon>Revtraviricetes</taxon>
        <taxon>Ortervirales</taxon>
        <taxon>Retroviridae</taxon>
        <taxon>Orthoretrovirinae</taxon>
        <taxon>Lentivirus</taxon>
        <taxon>Human immunodeficiency virus type 1</taxon>
    </lineage>
</organism>
<gene>
    <name evidence="1" type="primary">rev</name>
</gene>
<dbReference type="EMBL" id="M11840">
    <property type="protein sequence ID" value="AAA45000.1"/>
    <property type="molecule type" value="Genomic_RNA"/>
</dbReference>
<dbReference type="SMR" id="P04325"/>
<dbReference type="IntAct" id="P04325">
    <property type="interactions" value="1"/>
</dbReference>
<dbReference type="MINT" id="P04325"/>
<dbReference type="GO" id="GO:0030430">
    <property type="term" value="C:host cell cytoplasm"/>
    <property type="evidence" value="ECO:0007669"/>
    <property type="project" value="UniProtKB-SubCell"/>
</dbReference>
<dbReference type="GO" id="GO:0044196">
    <property type="term" value="C:host cell nucleolus"/>
    <property type="evidence" value="ECO:0007669"/>
    <property type="project" value="UniProtKB-SubCell"/>
</dbReference>
<dbReference type="GO" id="GO:0003700">
    <property type="term" value="F:DNA-binding transcription factor activity"/>
    <property type="evidence" value="ECO:0007669"/>
    <property type="project" value="UniProtKB-UniRule"/>
</dbReference>
<dbReference type="GO" id="GO:0003723">
    <property type="term" value="F:RNA binding"/>
    <property type="evidence" value="ECO:0000269"/>
    <property type="project" value="DisProt"/>
</dbReference>
<dbReference type="GO" id="GO:0051028">
    <property type="term" value="P:mRNA transport"/>
    <property type="evidence" value="ECO:0007669"/>
    <property type="project" value="UniProtKB-UniRule"/>
</dbReference>
<dbReference type="GO" id="GO:1990173">
    <property type="term" value="P:protein localization to nucleoplasm"/>
    <property type="evidence" value="ECO:0000314"/>
    <property type="project" value="DisProt"/>
</dbReference>
<dbReference type="GO" id="GO:0016032">
    <property type="term" value="P:viral process"/>
    <property type="evidence" value="ECO:0007669"/>
    <property type="project" value="UniProtKB-UniRule"/>
</dbReference>
<dbReference type="DisProt" id="DP00424"/>
<dbReference type="Gene3D" id="6.10.140.630">
    <property type="match status" value="1"/>
</dbReference>
<dbReference type="HAMAP" id="MF_04077">
    <property type="entry name" value="REV_HIV1"/>
    <property type="match status" value="1"/>
</dbReference>
<dbReference type="InterPro" id="IPR000625">
    <property type="entry name" value="REV_protein"/>
</dbReference>
<dbReference type="Pfam" id="PF00424">
    <property type="entry name" value="REV"/>
    <property type="match status" value="1"/>
</dbReference>
<protein>
    <recommendedName>
        <fullName evidence="1">Protein Rev</fullName>
    </recommendedName>
    <alternativeName>
        <fullName evidence="1">ART/TRS</fullName>
    </alternativeName>
    <alternativeName>
        <fullName evidence="1">Anti-repression transactivator</fullName>
    </alternativeName>
    <alternativeName>
        <fullName evidence="1">Regulator of expression of viral proteins</fullName>
    </alternativeName>
</protein>
<keyword id="KW-0014">AIDS</keyword>
<keyword id="KW-1035">Host cytoplasm</keyword>
<keyword id="KW-1048">Host nucleus</keyword>
<keyword id="KW-0945">Host-virus interaction</keyword>
<keyword id="KW-0488">Methylation</keyword>
<keyword id="KW-0509">mRNA transport</keyword>
<keyword id="KW-0597">Phosphoprotein</keyword>
<keyword id="KW-0694">RNA-binding</keyword>
<keyword id="KW-0813">Transport</keyword>
<sequence length="116" mass="13065">MAGRSGDSDEELLKAVRLIKFLYQSNPPPNPEGTRQARRNRRRRWRERQRQIHSISERILSTYLGRSAEPVPLQLPPLERLTLDCNEDCGTSGTQGVGSPQILVESPTILESGAKE</sequence>
<organismHost>
    <name type="scientific">Homo sapiens</name>
    <name type="common">Human</name>
    <dbReference type="NCBI Taxonomy" id="9606"/>
</organismHost>